<name>WDR38_HUMAN</name>
<dbReference type="EMBL" id="AL354928">
    <property type="status" value="NOT_ANNOTATED_CDS"/>
    <property type="molecule type" value="Genomic_DNA"/>
</dbReference>
<dbReference type="EMBL" id="BC127949">
    <property type="protein sequence ID" value="AAI27950.1"/>
    <property type="molecule type" value="mRNA"/>
</dbReference>
<dbReference type="CCDS" id="CCDS43876.1"/>
<dbReference type="RefSeq" id="NP_001038941.1">
    <property type="nucleotide sequence ID" value="NM_001045476.3"/>
</dbReference>
<dbReference type="SMR" id="Q5JTN6"/>
<dbReference type="FunCoup" id="Q5JTN6">
    <property type="interactions" value="2"/>
</dbReference>
<dbReference type="STRING" id="9606.ENSP00000483312"/>
<dbReference type="iPTMnet" id="Q5JTN6"/>
<dbReference type="PhosphoSitePlus" id="Q5JTN6"/>
<dbReference type="BioMuta" id="WDR38"/>
<dbReference type="DMDM" id="74755676"/>
<dbReference type="MassIVE" id="Q5JTN6"/>
<dbReference type="PeptideAtlas" id="Q5JTN6"/>
<dbReference type="ProteomicsDB" id="63225"/>
<dbReference type="Antibodypedia" id="64851">
    <property type="antibodies" value="19 antibodies from 11 providers"/>
</dbReference>
<dbReference type="DNASU" id="401551"/>
<dbReference type="Ensembl" id="ENST00000373574.2">
    <property type="protein sequence ID" value="ENSP00000362677.1"/>
    <property type="gene ID" value="ENSG00000136918.8"/>
</dbReference>
<dbReference type="GeneID" id="401551"/>
<dbReference type="KEGG" id="hsa:401551"/>
<dbReference type="MANE-Select" id="ENST00000373574.2">
    <property type="protein sequence ID" value="ENSP00000362677.1"/>
    <property type="RefSeq nucleotide sequence ID" value="NM_001045476.3"/>
    <property type="RefSeq protein sequence ID" value="NP_001038941.1"/>
</dbReference>
<dbReference type="UCSC" id="uc004box.5">
    <property type="organism name" value="human"/>
</dbReference>
<dbReference type="AGR" id="HGNC:23745"/>
<dbReference type="CTD" id="401551"/>
<dbReference type="GeneCards" id="WDR38"/>
<dbReference type="HGNC" id="HGNC:23745">
    <property type="gene designation" value="WDR38"/>
</dbReference>
<dbReference type="HPA" id="ENSG00000136918">
    <property type="expression patterns" value="Group enriched (choroid plexus, fallopian tube)"/>
</dbReference>
<dbReference type="neXtProt" id="NX_Q5JTN6"/>
<dbReference type="OpenTargets" id="ENSG00000136918"/>
<dbReference type="PharmGKB" id="PA162409138"/>
<dbReference type="VEuPathDB" id="HostDB:ENSG00000136918"/>
<dbReference type="eggNOG" id="KOG0266">
    <property type="taxonomic scope" value="Eukaryota"/>
</dbReference>
<dbReference type="eggNOG" id="KOG0273">
    <property type="taxonomic scope" value="Eukaryota"/>
</dbReference>
<dbReference type="GeneTree" id="ENSGT00940000162358"/>
<dbReference type="HOGENOM" id="CLU_000288_57_33_1"/>
<dbReference type="InParanoid" id="Q5JTN6"/>
<dbReference type="OMA" id="ELCHHTE"/>
<dbReference type="OrthoDB" id="674604at2759"/>
<dbReference type="PAN-GO" id="Q5JTN6">
    <property type="GO annotations" value="0 GO annotations based on evolutionary models"/>
</dbReference>
<dbReference type="PhylomeDB" id="Q5JTN6"/>
<dbReference type="TreeFam" id="TF328741"/>
<dbReference type="PathwayCommons" id="Q5JTN6"/>
<dbReference type="SignaLink" id="Q5JTN6"/>
<dbReference type="BioGRID-ORCS" id="401551">
    <property type="hits" value="23 hits in 1143 CRISPR screens"/>
</dbReference>
<dbReference type="ChiTaRS" id="WDR38">
    <property type="organism name" value="human"/>
</dbReference>
<dbReference type="GenomeRNAi" id="401551"/>
<dbReference type="Pharos" id="Q5JTN6">
    <property type="development level" value="Tdark"/>
</dbReference>
<dbReference type="PRO" id="PR:Q5JTN6"/>
<dbReference type="Proteomes" id="UP000005640">
    <property type="component" value="Chromosome 9"/>
</dbReference>
<dbReference type="RNAct" id="Q5JTN6">
    <property type="molecule type" value="protein"/>
</dbReference>
<dbReference type="Bgee" id="ENSG00000136918">
    <property type="expression patterns" value="Expressed in bronchial epithelial cell and 88 other cell types or tissues"/>
</dbReference>
<dbReference type="ExpressionAtlas" id="Q5JTN6">
    <property type="expression patterns" value="baseline and differential"/>
</dbReference>
<dbReference type="GO" id="GO:1990234">
    <property type="term" value="C:transferase complex"/>
    <property type="evidence" value="ECO:0007669"/>
    <property type="project" value="UniProtKB-ARBA"/>
</dbReference>
<dbReference type="GO" id="GO:0002244">
    <property type="term" value="P:hematopoietic progenitor cell differentiation"/>
    <property type="evidence" value="ECO:0007669"/>
    <property type="project" value="Ensembl"/>
</dbReference>
<dbReference type="CDD" id="cd00200">
    <property type="entry name" value="WD40"/>
    <property type="match status" value="1"/>
</dbReference>
<dbReference type="Gene3D" id="2.130.10.10">
    <property type="entry name" value="YVTN repeat-like/Quinoprotein amine dehydrogenase"/>
    <property type="match status" value="3"/>
</dbReference>
<dbReference type="InterPro" id="IPR020472">
    <property type="entry name" value="G-protein_beta_WD-40_rep"/>
</dbReference>
<dbReference type="InterPro" id="IPR015943">
    <property type="entry name" value="WD40/YVTN_repeat-like_dom_sf"/>
</dbReference>
<dbReference type="InterPro" id="IPR019775">
    <property type="entry name" value="WD40_repeat_CS"/>
</dbReference>
<dbReference type="InterPro" id="IPR036322">
    <property type="entry name" value="WD40_repeat_dom_sf"/>
</dbReference>
<dbReference type="InterPro" id="IPR001680">
    <property type="entry name" value="WD40_rpt"/>
</dbReference>
<dbReference type="PANTHER" id="PTHR22847:SF637">
    <property type="entry name" value="WD REPEAT DOMAIN 5B"/>
    <property type="match status" value="1"/>
</dbReference>
<dbReference type="PANTHER" id="PTHR22847">
    <property type="entry name" value="WD40 REPEAT PROTEIN"/>
    <property type="match status" value="1"/>
</dbReference>
<dbReference type="Pfam" id="PF00400">
    <property type="entry name" value="WD40"/>
    <property type="match status" value="7"/>
</dbReference>
<dbReference type="PRINTS" id="PR00320">
    <property type="entry name" value="GPROTEINBRPT"/>
</dbReference>
<dbReference type="SMART" id="SM00320">
    <property type="entry name" value="WD40"/>
    <property type="match status" value="7"/>
</dbReference>
<dbReference type="SUPFAM" id="SSF50978">
    <property type="entry name" value="WD40 repeat-like"/>
    <property type="match status" value="1"/>
</dbReference>
<dbReference type="PROSITE" id="PS00678">
    <property type="entry name" value="WD_REPEATS_1"/>
    <property type="match status" value="3"/>
</dbReference>
<dbReference type="PROSITE" id="PS50082">
    <property type="entry name" value="WD_REPEATS_2"/>
    <property type="match status" value="6"/>
</dbReference>
<dbReference type="PROSITE" id="PS50294">
    <property type="entry name" value="WD_REPEATS_REGION"/>
    <property type="match status" value="1"/>
</dbReference>
<proteinExistence type="evidence at protein level"/>
<sequence>MNSGVPATLAVRRVKFFGQHGGEVNSSAFSPDGQMLLTGSEDGCVYGWETRSGQLLWRLGGHTGPVKFCRFSPDGHLFASASCDCTVRLWDVARAKCLRVLKGHQRSVETVSFSPDSRQLASGGWDKRVMLWDVQSGQMLRLLVGHRDSIQSSDFSPTVNCLATGSWDSTVHIWDLRMVTPAVSHQALEGHSANISCLCYSASGLLASGSWDKTIHIWKPTTSSLLIQLKGHVTWVKSIAFSPDELWLASAGYSRMVKVWDCNTGKCLETLKGVLDVAHTCAFTPDGKILVSGAADQTRRQISRTSKSPRDPQT</sequence>
<evidence type="ECO:0000256" key="1">
    <source>
        <dbReference type="SAM" id="MobiDB-lite"/>
    </source>
</evidence>
<evidence type="ECO:0000269" key="2">
    <source>
    </source>
</evidence>
<keyword id="KW-1267">Proteomics identification</keyword>
<keyword id="KW-1185">Reference proteome</keyword>
<keyword id="KW-0677">Repeat</keyword>
<keyword id="KW-0853">WD repeat</keyword>
<accession>Q5JTN6</accession>
<accession>A0PK24</accession>
<reference key="1">
    <citation type="journal article" date="2004" name="Nature">
        <title>DNA sequence and analysis of human chromosome 9.</title>
        <authorList>
            <person name="Humphray S.J."/>
            <person name="Oliver K."/>
            <person name="Hunt A.R."/>
            <person name="Plumb R.W."/>
            <person name="Loveland J.E."/>
            <person name="Howe K.L."/>
            <person name="Andrews T.D."/>
            <person name="Searle S."/>
            <person name="Hunt S.E."/>
            <person name="Scott C.E."/>
            <person name="Jones M.C."/>
            <person name="Ainscough R."/>
            <person name="Almeida J.P."/>
            <person name="Ambrose K.D."/>
            <person name="Ashwell R.I.S."/>
            <person name="Babbage A.K."/>
            <person name="Babbage S."/>
            <person name="Bagguley C.L."/>
            <person name="Bailey J."/>
            <person name="Banerjee R."/>
            <person name="Barker D.J."/>
            <person name="Barlow K.F."/>
            <person name="Bates K."/>
            <person name="Beasley H."/>
            <person name="Beasley O."/>
            <person name="Bird C.P."/>
            <person name="Bray-Allen S."/>
            <person name="Brown A.J."/>
            <person name="Brown J.Y."/>
            <person name="Burford D."/>
            <person name="Burrill W."/>
            <person name="Burton J."/>
            <person name="Carder C."/>
            <person name="Carter N.P."/>
            <person name="Chapman J.C."/>
            <person name="Chen Y."/>
            <person name="Clarke G."/>
            <person name="Clark S.Y."/>
            <person name="Clee C.M."/>
            <person name="Clegg S."/>
            <person name="Collier R.E."/>
            <person name="Corby N."/>
            <person name="Crosier M."/>
            <person name="Cummings A.T."/>
            <person name="Davies J."/>
            <person name="Dhami P."/>
            <person name="Dunn M."/>
            <person name="Dutta I."/>
            <person name="Dyer L.W."/>
            <person name="Earthrowl M.E."/>
            <person name="Faulkner L."/>
            <person name="Fleming C.J."/>
            <person name="Frankish A."/>
            <person name="Frankland J.A."/>
            <person name="French L."/>
            <person name="Fricker D.G."/>
            <person name="Garner P."/>
            <person name="Garnett J."/>
            <person name="Ghori J."/>
            <person name="Gilbert J.G.R."/>
            <person name="Glison C."/>
            <person name="Grafham D.V."/>
            <person name="Gribble S."/>
            <person name="Griffiths C."/>
            <person name="Griffiths-Jones S."/>
            <person name="Grocock R."/>
            <person name="Guy J."/>
            <person name="Hall R.E."/>
            <person name="Hammond S."/>
            <person name="Harley J.L."/>
            <person name="Harrison E.S.I."/>
            <person name="Hart E.A."/>
            <person name="Heath P.D."/>
            <person name="Henderson C.D."/>
            <person name="Hopkins B.L."/>
            <person name="Howard P.J."/>
            <person name="Howden P.J."/>
            <person name="Huckle E."/>
            <person name="Johnson C."/>
            <person name="Johnson D."/>
            <person name="Joy A.A."/>
            <person name="Kay M."/>
            <person name="Keenan S."/>
            <person name="Kershaw J.K."/>
            <person name="Kimberley A.M."/>
            <person name="King A."/>
            <person name="Knights A."/>
            <person name="Laird G.K."/>
            <person name="Langford C."/>
            <person name="Lawlor S."/>
            <person name="Leongamornlert D.A."/>
            <person name="Leversha M."/>
            <person name="Lloyd C."/>
            <person name="Lloyd D.M."/>
            <person name="Lovell J."/>
            <person name="Martin S."/>
            <person name="Mashreghi-Mohammadi M."/>
            <person name="Matthews L."/>
            <person name="McLaren S."/>
            <person name="McLay K.E."/>
            <person name="McMurray A."/>
            <person name="Milne S."/>
            <person name="Nickerson T."/>
            <person name="Nisbett J."/>
            <person name="Nordsiek G."/>
            <person name="Pearce A.V."/>
            <person name="Peck A.I."/>
            <person name="Porter K.M."/>
            <person name="Pandian R."/>
            <person name="Pelan S."/>
            <person name="Phillimore B."/>
            <person name="Povey S."/>
            <person name="Ramsey Y."/>
            <person name="Rand V."/>
            <person name="Scharfe M."/>
            <person name="Sehra H.K."/>
            <person name="Shownkeen R."/>
            <person name="Sims S.K."/>
            <person name="Skuce C.D."/>
            <person name="Smith M."/>
            <person name="Steward C.A."/>
            <person name="Swarbreck D."/>
            <person name="Sycamore N."/>
            <person name="Tester J."/>
            <person name="Thorpe A."/>
            <person name="Tracey A."/>
            <person name="Tromans A."/>
            <person name="Thomas D.W."/>
            <person name="Wall M."/>
            <person name="Wallis J.M."/>
            <person name="West A.P."/>
            <person name="Whitehead S.L."/>
            <person name="Willey D.L."/>
            <person name="Williams S.A."/>
            <person name="Wilming L."/>
            <person name="Wray P.W."/>
            <person name="Young L."/>
            <person name="Ashurst J.L."/>
            <person name="Coulson A."/>
            <person name="Blocker H."/>
            <person name="Durbin R.M."/>
            <person name="Sulston J.E."/>
            <person name="Hubbard T."/>
            <person name="Jackson M.J."/>
            <person name="Bentley D.R."/>
            <person name="Beck S."/>
            <person name="Rogers J."/>
            <person name="Dunham I."/>
        </authorList>
    </citation>
    <scope>NUCLEOTIDE SEQUENCE [LARGE SCALE GENOMIC DNA]</scope>
</reference>
<reference key="2">
    <citation type="journal article" date="2004" name="Genome Res.">
        <title>The status, quality, and expansion of the NIH full-length cDNA project: the Mammalian Gene Collection (MGC).</title>
        <authorList>
            <consortium name="The MGC Project Team"/>
        </authorList>
    </citation>
    <scope>NUCLEOTIDE SEQUENCE [LARGE SCALE MRNA]</scope>
    <scope>VARIANTS ARG-172 AND GLY-193</scope>
</reference>
<gene>
    <name type="primary">WDR38</name>
</gene>
<feature type="chain" id="PRO_0000294440" description="WD repeat-containing protein 38">
    <location>
        <begin position="1"/>
        <end position="314"/>
    </location>
</feature>
<feature type="repeat" description="WD 1">
    <location>
        <begin position="19"/>
        <end position="58"/>
    </location>
</feature>
<feature type="repeat" description="WD 2">
    <location>
        <begin position="61"/>
        <end position="100"/>
    </location>
</feature>
<feature type="repeat" description="WD 3">
    <location>
        <begin position="103"/>
        <end position="142"/>
    </location>
</feature>
<feature type="repeat" description="WD 4">
    <location>
        <begin position="145"/>
        <end position="184"/>
    </location>
</feature>
<feature type="repeat" description="WD 5">
    <location>
        <begin position="190"/>
        <end position="228"/>
    </location>
</feature>
<feature type="repeat" description="WD 6">
    <location>
        <begin position="231"/>
        <end position="272"/>
    </location>
</feature>
<feature type="repeat" description="WD 7">
    <location>
        <begin position="274"/>
        <end position="312"/>
    </location>
</feature>
<feature type="region of interest" description="Disordered" evidence="1">
    <location>
        <begin position="294"/>
        <end position="314"/>
    </location>
</feature>
<feature type="sequence variant" id="VAR_053431" description="In dbSNP:rs2274970." evidence="2">
    <original>H</original>
    <variation>R</variation>
    <location>
        <position position="172"/>
    </location>
</feature>
<feature type="sequence variant" id="VAR_053432" description="In dbSNP:rs10760381." evidence="2">
    <original>A</original>
    <variation>G</variation>
    <location>
        <position position="193"/>
    </location>
</feature>
<organism>
    <name type="scientific">Homo sapiens</name>
    <name type="common">Human</name>
    <dbReference type="NCBI Taxonomy" id="9606"/>
    <lineage>
        <taxon>Eukaryota</taxon>
        <taxon>Metazoa</taxon>
        <taxon>Chordata</taxon>
        <taxon>Craniata</taxon>
        <taxon>Vertebrata</taxon>
        <taxon>Euteleostomi</taxon>
        <taxon>Mammalia</taxon>
        <taxon>Eutheria</taxon>
        <taxon>Euarchontoglires</taxon>
        <taxon>Primates</taxon>
        <taxon>Haplorrhini</taxon>
        <taxon>Catarrhini</taxon>
        <taxon>Hominidae</taxon>
        <taxon>Homo</taxon>
    </lineage>
</organism>
<protein>
    <recommendedName>
        <fullName>WD repeat-containing protein 38</fullName>
    </recommendedName>
</protein>